<comment type="function">
    <text evidence="4">Acts as an inhibitor of GDB1, enhancing the ability of cells to store glucose as glycogen.</text>
</comment>
<comment type="subunit">
    <text evidence="4">Interacts with GDB1.</text>
</comment>
<comment type="subcellular location">
    <subcellularLocation>
        <location evidence="2">Cytoplasm</location>
    </subcellularLocation>
</comment>
<comment type="induction">
    <text evidence="4">Expression increases during wine fermentation.</text>
</comment>
<comment type="miscellaneous">
    <text evidence="3">Present with 639 molecules/cell in log phase SD medium.</text>
</comment>
<keyword id="KW-0963">Cytoplasm</keyword>
<keyword id="KW-0320">Glycogen biosynthesis</keyword>
<keyword id="KW-0597">Phosphoprotein</keyword>
<keyword id="KW-1185">Reference proteome</keyword>
<proteinExistence type="evidence at protein level"/>
<protein>
    <recommendedName>
        <fullName>Inhibitor of glycogen debranching 1</fullName>
    </recommendedName>
</protein>
<evidence type="ECO:0000256" key="1">
    <source>
        <dbReference type="SAM" id="MobiDB-lite"/>
    </source>
</evidence>
<evidence type="ECO:0000269" key="2">
    <source>
    </source>
</evidence>
<evidence type="ECO:0000269" key="3">
    <source>
    </source>
</evidence>
<evidence type="ECO:0000269" key="4">
    <source>
    </source>
</evidence>
<evidence type="ECO:0007744" key="5">
    <source>
    </source>
</evidence>
<evidence type="ECO:0007744" key="6">
    <source>
    </source>
</evidence>
<feature type="chain" id="PRO_0000202687" description="Inhibitor of glycogen debranching 1">
    <location>
        <begin position="1"/>
        <end position="195"/>
    </location>
</feature>
<feature type="region of interest" description="Disordered" evidence="1">
    <location>
        <begin position="1"/>
        <end position="101"/>
    </location>
</feature>
<feature type="region of interest" description="Disordered" evidence="1">
    <location>
        <begin position="146"/>
        <end position="175"/>
    </location>
</feature>
<feature type="compositionally biased region" description="Polar residues" evidence="1">
    <location>
        <begin position="1"/>
        <end position="18"/>
    </location>
</feature>
<feature type="compositionally biased region" description="Basic and acidic residues" evidence="1">
    <location>
        <begin position="75"/>
        <end position="95"/>
    </location>
</feature>
<feature type="compositionally biased region" description="Polar residues" evidence="1">
    <location>
        <begin position="148"/>
        <end position="157"/>
    </location>
</feature>
<feature type="modified residue" description="Phosphoserine" evidence="6">
    <location>
        <position position="64"/>
    </location>
</feature>
<feature type="modified residue" description="Phosphothreonine" evidence="6">
    <location>
        <position position="65"/>
    </location>
</feature>
<feature type="modified residue" description="Phosphoserine" evidence="6">
    <location>
        <position position="95"/>
    </location>
</feature>
<feature type="modified residue" description="Phosphoserine" evidence="6">
    <location>
        <position position="96"/>
    </location>
</feature>
<feature type="modified residue" description="Phosphothreonine" evidence="6">
    <location>
        <position position="132"/>
    </location>
</feature>
<feature type="modified residue" description="Phosphoserine" evidence="5 6">
    <location>
        <position position="164"/>
    </location>
</feature>
<sequence>MTDPHLNTPQVSTSPTFERSQDFLNIDEPPCAQETPSVSTFNLPGPSAPAQSVDKPVPMIRRRSTNYMDALNSREQARERESSIGEHAPGAERRSSGPMDFQNTIHNMQYRTTNDSDLSHAGVDMGDSISHTPICSRAGNRPIFKNSYLDNNSNGNSARVPHGSPPQLGTRRKSSFKYEDFKKDIYNQLHMFGEK</sequence>
<reference key="1">
    <citation type="journal article" date="1995" name="Nat. Genet.">
        <title>Analysis of the nucleotide sequence of chromosome VI from Saccharomyces cerevisiae.</title>
        <authorList>
            <person name="Murakami Y."/>
            <person name="Naitou M."/>
            <person name="Hagiwara H."/>
            <person name="Shibata T."/>
            <person name="Ozawa M."/>
            <person name="Sasanuma S."/>
            <person name="Sasanuma M."/>
            <person name="Tsuchiya Y."/>
            <person name="Soeda E."/>
            <person name="Yokoyama K."/>
            <person name="Yamazaki M."/>
            <person name="Tashiro H."/>
            <person name="Eki T."/>
        </authorList>
    </citation>
    <scope>NUCLEOTIDE SEQUENCE [LARGE SCALE GENOMIC DNA]</scope>
    <source>
        <strain>ATCC 204508 / S288c</strain>
    </source>
</reference>
<reference key="2">
    <citation type="journal article" date="2014" name="G3 (Bethesda)">
        <title>The reference genome sequence of Saccharomyces cerevisiae: Then and now.</title>
        <authorList>
            <person name="Engel S.R."/>
            <person name="Dietrich F.S."/>
            <person name="Fisk D.G."/>
            <person name="Binkley G."/>
            <person name="Balakrishnan R."/>
            <person name="Costanzo M.C."/>
            <person name="Dwight S.S."/>
            <person name="Hitz B.C."/>
            <person name="Karra K."/>
            <person name="Nash R.S."/>
            <person name="Weng S."/>
            <person name="Wong E.D."/>
            <person name="Lloyd P."/>
            <person name="Skrzypek M.S."/>
            <person name="Miyasato S.R."/>
            <person name="Simison M."/>
            <person name="Cherry J.M."/>
        </authorList>
    </citation>
    <scope>GENOME REANNOTATION</scope>
    <source>
        <strain>ATCC 204508 / S288c</strain>
    </source>
</reference>
<reference key="3">
    <citation type="journal article" date="2007" name="Genome Res.">
        <title>Approaching a complete repository of sequence-verified protein-encoding clones for Saccharomyces cerevisiae.</title>
        <authorList>
            <person name="Hu Y."/>
            <person name="Rolfs A."/>
            <person name="Bhullar B."/>
            <person name="Murthy T.V.S."/>
            <person name="Zhu C."/>
            <person name="Berger M.F."/>
            <person name="Camargo A.A."/>
            <person name="Kelley F."/>
            <person name="McCarron S."/>
            <person name="Jepson D."/>
            <person name="Richardson A."/>
            <person name="Raphael J."/>
            <person name="Moreira D."/>
            <person name="Taycher E."/>
            <person name="Zuo D."/>
            <person name="Mohr S."/>
            <person name="Kane M.F."/>
            <person name="Williamson J."/>
            <person name="Simpson A.J.G."/>
            <person name="Bulyk M.L."/>
            <person name="Harlow E."/>
            <person name="Marsischky G."/>
            <person name="Kolodner R.D."/>
            <person name="LaBaer J."/>
        </authorList>
    </citation>
    <scope>NUCLEOTIDE SEQUENCE [GENOMIC DNA]</scope>
    <source>
        <strain>ATCC 204508 / S288c</strain>
    </source>
</reference>
<reference key="4">
    <citation type="journal article" date="2003" name="Nature">
        <title>Global analysis of protein localization in budding yeast.</title>
        <authorList>
            <person name="Huh W.-K."/>
            <person name="Falvo J.V."/>
            <person name="Gerke L.C."/>
            <person name="Carroll A.S."/>
            <person name="Howson R.W."/>
            <person name="Weissman J.S."/>
            <person name="O'Shea E.K."/>
        </authorList>
    </citation>
    <scope>SUBCELLULAR LOCATION [LARGE SCALE ANALYSIS]</scope>
</reference>
<reference key="5">
    <citation type="journal article" date="2003" name="Nature">
        <title>Global analysis of protein expression in yeast.</title>
        <authorList>
            <person name="Ghaemmaghami S."/>
            <person name="Huh W.-K."/>
            <person name="Bower K."/>
            <person name="Howson R.W."/>
            <person name="Belle A."/>
            <person name="Dephoure N."/>
            <person name="O'Shea E.K."/>
            <person name="Weissman J.S."/>
        </authorList>
    </citation>
    <scope>LEVEL OF PROTEIN EXPRESSION [LARGE SCALE ANALYSIS]</scope>
</reference>
<reference key="6">
    <citation type="journal article" date="2007" name="Proc. Natl. Acad. Sci. U.S.A.">
        <title>Analysis of phosphorylation sites on proteins from Saccharomyces cerevisiae by electron transfer dissociation (ETD) mass spectrometry.</title>
        <authorList>
            <person name="Chi A."/>
            <person name="Huttenhower C."/>
            <person name="Geer L.Y."/>
            <person name="Coon J.J."/>
            <person name="Syka J.E.P."/>
            <person name="Bai D.L."/>
            <person name="Shabanowitz J."/>
            <person name="Burke D.J."/>
            <person name="Troyanskaya O.G."/>
            <person name="Hunt D.F."/>
        </authorList>
    </citation>
    <scope>IDENTIFICATION BY MASS SPECTROMETRY [LARGE SCALE ANALYSIS]</scope>
</reference>
<reference key="7">
    <citation type="journal article" date="2008" name="Mol. Cell. Proteomics">
        <title>A multidimensional chromatography technology for in-depth phosphoproteome analysis.</title>
        <authorList>
            <person name="Albuquerque C.P."/>
            <person name="Smolka M.B."/>
            <person name="Payne S.H."/>
            <person name="Bafna V."/>
            <person name="Eng J."/>
            <person name="Zhou H."/>
        </authorList>
    </citation>
    <scope>PHOSPHORYLATION [LARGE SCALE ANALYSIS] AT SER-164</scope>
    <scope>IDENTIFICATION BY MASS SPECTROMETRY [LARGE SCALE ANALYSIS]</scope>
</reference>
<reference key="8">
    <citation type="journal article" date="2009" name="Science">
        <title>Global analysis of Cdk1 substrate phosphorylation sites provides insights into evolution.</title>
        <authorList>
            <person name="Holt L.J."/>
            <person name="Tuch B.B."/>
            <person name="Villen J."/>
            <person name="Johnson A.D."/>
            <person name="Gygi S.P."/>
            <person name="Morgan D.O."/>
        </authorList>
    </citation>
    <scope>PHOSPHORYLATION [LARGE SCALE ANALYSIS] AT SER-64; THR-65; SER-95; SER-96; THR-132 AND SER-164</scope>
    <scope>IDENTIFICATION BY MASS SPECTROMETRY [LARGE SCALE ANALYSIS]</scope>
</reference>
<reference key="9">
    <citation type="journal article" date="2011" name="FEMS Yeast Res.">
        <title>The Saccharomyces cerevisiae fermentation stress response protein Igd1p/Yfr017p regulates glycogen levels by inhibiting the glycogen debranching enzyme.</title>
        <authorList>
            <person name="Walkey C.J."/>
            <person name="Luo Z."/>
            <person name="Borchers C.H."/>
            <person name="Measday V."/>
            <person name="van Vuuren H.J."/>
        </authorList>
    </citation>
    <scope>INDUCTION</scope>
    <scope>INTERACTION WITH GDB1</scope>
    <scope>FUNCTION</scope>
</reference>
<reference key="10">
    <citation type="journal article" date="2012" name="Proc. Natl. Acad. Sci. U.S.A.">
        <title>N-terminal acetylome analyses and functional insights of the N-terminal acetyltransferase NatB.</title>
        <authorList>
            <person name="Van Damme P."/>
            <person name="Lasa M."/>
            <person name="Polevoda B."/>
            <person name="Gazquez C."/>
            <person name="Elosegui-Artola A."/>
            <person name="Kim D.S."/>
            <person name="De Juan-Pardo E."/>
            <person name="Demeyer K."/>
            <person name="Hole K."/>
            <person name="Larrea E."/>
            <person name="Timmerman E."/>
            <person name="Prieto J."/>
            <person name="Arnesen T."/>
            <person name="Sherman F."/>
            <person name="Gevaert K."/>
            <person name="Aldabe R."/>
        </authorList>
    </citation>
    <scope>IDENTIFICATION BY MASS SPECTROMETRY [LARGE SCALE ANALYSIS]</scope>
</reference>
<dbReference type="EMBL" id="D50617">
    <property type="protein sequence ID" value="BAA09256.1"/>
    <property type="molecule type" value="Genomic_DNA"/>
</dbReference>
<dbReference type="EMBL" id="AY558470">
    <property type="protein sequence ID" value="AAS56796.1"/>
    <property type="molecule type" value="Genomic_DNA"/>
</dbReference>
<dbReference type="EMBL" id="BK006940">
    <property type="protein sequence ID" value="DAA12458.1"/>
    <property type="molecule type" value="Genomic_DNA"/>
</dbReference>
<dbReference type="PIR" id="S43032">
    <property type="entry name" value="S43032"/>
</dbReference>
<dbReference type="RefSeq" id="NP_116672.1">
    <property type="nucleotide sequence ID" value="NM_001179982.1"/>
</dbReference>
<dbReference type="SMR" id="P43598"/>
<dbReference type="BioGRID" id="31170">
    <property type="interactions" value="52"/>
</dbReference>
<dbReference type="DIP" id="DIP-3799N"/>
<dbReference type="FunCoup" id="P43598">
    <property type="interactions" value="146"/>
</dbReference>
<dbReference type="IntAct" id="P43598">
    <property type="interactions" value="4"/>
</dbReference>
<dbReference type="MINT" id="P43598"/>
<dbReference type="STRING" id="4932.YFR017C"/>
<dbReference type="iPTMnet" id="P43598"/>
<dbReference type="PaxDb" id="4932-YFR017C"/>
<dbReference type="PeptideAtlas" id="P43598"/>
<dbReference type="EnsemblFungi" id="YFR017C_mRNA">
    <property type="protein sequence ID" value="YFR017C"/>
    <property type="gene ID" value="YFR017C"/>
</dbReference>
<dbReference type="GeneID" id="850572"/>
<dbReference type="KEGG" id="sce:YFR017C"/>
<dbReference type="AGR" id="SGD:S000001913"/>
<dbReference type="SGD" id="S000001913">
    <property type="gene designation" value="IGD1"/>
</dbReference>
<dbReference type="VEuPathDB" id="FungiDB:YFR017C"/>
<dbReference type="eggNOG" id="ENOG502SDB0">
    <property type="taxonomic scope" value="Eukaryota"/>
</dbReference>
<dbReference type="HOGENOM" id="CLU_1397327_0_0_1"/>
<dbReference type="InParanoid" id="P43598"/>
<dbReference type="OMA" id="ICERVDM"/>
<dbReference type="OrthoDB" id="4058540at2759"/>
<dbReference type="BioCyc" id="YEAST:G3O-30469-MONOMER"/>
<dbReference type="BioGRID-ORCS" id="850572">
    <property type="hits" value="9 hits in 10 CRISPR screens"/>
</dbReference>
<dbReference type="PRO" id="PR:P43598"/>
<dbReference type="Proteomes" id="UP000002311">
    <property type="component" value="Chromosome VI"/>
</dbReference>
<dbReference type="RNAct" id="P43598">
    <property type="molecule type" value="protein"/>
</dbReference>
<dbReference type="GO" id="GO:0005737">
    <property type="term" value="C:cytoplasm"/>
    <property type="evidence" value="ECO:0007005"/>
    <property type="project" value="SGD"/>
</dbReference>
<dbReference type="GO" id="GO:0004857">
    <property type="term" value="F:enzyme inhibitor activity"/>
    <property type="evidence" value="ECO:0000314"/>
    <property type="project" value="SGD"/>
</dbReference>
<dbReference type="GO" id="GO:0005978">
    <property type="term" value="P:glycogen biosynthetic process"/>
    <property type="evidence" value="ECO:0007669"/>
    <property type="project" value="UniProtKB-KW"/>
</dbReference>
<dbReference type="GO" id="GO:0045818">
    <property type="term" value="P:negative regulation of glycogen catabolic process"/>
    <property type="evidence" value="ECO:0000315"/>
    <property type="project" value="SGD"/>
</dbReference>
<organism>
    <name type="scientific">Saccharomyces cerevisiae (strain ATCC 204508 / S288c)</name>
    <name type="common">Baker's yeast</name>
    <dbReference type="NCBI Taxonomy" id="559292"/>
    <lineage>
        <taxon>Eukaryota</taxon>
        <taxon>Fungi</taxon>
        <taxon>Dikarya</taxon>
        <taxon>Ascomycota</taxon>
        <taxon>Saccharomycotina</taxon>
        <taxon>Saccharomycetes</taxon>
        <taxon>Saccharomycetales</taxon>
        <taxon>Saccharomycetaceae</taxon>
        <taxon>Saccharomyces</taxon>
    </lineage>
</organism>
<accession>P43598</accession>
<accession>D6VTP8</accession>
<gene>
    <name type="primary">IGD1</name>
    <name type="ordered locus">YFR017C</name>
</gene>
<name>IGD1_YEAST</name>